<gene>
    <name evidence="1" type="primary">dnaA</name>
    <name type="ordered locus">ACL_0001</name>
</gene>
<comment type="function">
    <text evidence="1">Plays an essential role in the initiation and regulation of chromosomal replication. ATP-DnaA binds to the origin of replication (oriC) to initiate formation of the DNA replication initiation complex once per cell cycle. Binds the DnaA box (a 9 base pair repeat at the origin) and separates the double-stranded (ds)DNA. Forms a right-handed helical filament on oriC DNA; dsDNA binds to the exterior of the filament while single-stranded (ss)DNA is stabiized in the filament's interior. The ATP-DnaA-oriC complex binds and stabilizes one strand of the AT-rich DNA unwinding element (DUE), permitting loading of DNA polymerase. After initiation quickly degrades to an ADP-DnaA complex that is not apt for DNA replication. Binds acidic phospholipids.</text>
</comment>
<comment type="subunit">
    <text evidence="1">Oligomerizes as a right-handed, spiral filament on DNA at oriC.</text>
</comment>
<comment type="subcellular location">
    <subcellularLocation>
        <location evidence="1">Cytoplasm</location>
    </subcellularLocation>
</comment>
<comment type="domain">
    <text evidence="1">Domain I is involved in oligomerization and binding regulators, domain II is flexibile and of varying length in different bacteria, domain III forms the AAA+ region, while domain IV binds dsDNA.</text>
</comment>
<comment type="similarity">
    <text evidence="1">Belongs to the DnaA family.</text>
</comment>
<keyword id="KW-0067">ATP-binding</keyword>
<keyword id="KW-0963">Cytoplasm</keyword>
<keyword id="KW-0235">DNA replication</keyword>
<keyword id="KW-0238">DNA-binding</keyword>
<keyword id="KW-0446">Lipid-binding</keyword>
<keyword id="KW-0547">Nucleotide-binding</keyword>
<keyword id="KW-1185">Reference proteome</keyword>
<organism>
    <name type="scientific">Acholeplasma laidlawii (strain PG-8A)</name>
    <dbReference type="NCBI Taxonomy" id="441768"/>
    <lineage>
        <taxon>Bacteria</taxon>
        <taxon>Bacillati</taxon>
        <taxon>Mycoplasmatota</taxon>
        <taxon>Mollicutes</taxon>
        <taxon>Acholeplasmatales</taxon>
        <taxon>Acholeplasmataceae</taxon>
        <taxon>Acholeplasma</taxon>
    </lineage>
</organism>
<dbReference type="EMBL" id="CP000896">
    <property type="protein sequence ID" value="ABX80645.1"/>
    <property type="molecule type" value="Genomic_DNA"/>
</dbReference>
<dbReference type="RefSeq" id="WP_012241976.1">
    <property type="nucleotide sequence ID" value="NC_010163.1"/>
</dbReference>
<dbReference type="SMR" id="A9NE65"/>
<dbReference type="STRING" id="441768.ACL_0001"/>
<dbReference type="GeneID" id="41338205"/>
<dbReference type="KEGG" id="acl:ACL_0001"/>
<dbReference type="eggNOG" id="COG0593">
    <property type="taxonomic scope" value="Bacteria"/>
</dbReference>
<dbReference type="HOGENOM" id="CLU_026910_3_2_14"/>
<dbReference type="OrthoDB" id="9807019at2"/>
<dbReference type="Proteomes" id="UP000008558">
    <property type="component" value="Chromosome"/>
</dbReference>
<dbReference type="GO" id="GO:0005737">
    <property type="term" value="C:cytoplasm"/>
    <property type="evidence" value="ECO:0007669"/>
    <property type="project" value="UniProtKB-SubCell"/>
</dbReference>
<dbReference type="GO" id="GO:0005886">
    <property type="term" value="C:plasma membrane"/>
    <property type="evidence" value="ECO:0007669"/>
    <property type="project" value="TreeGrafter"/>
</dbReference>
<dbReference type="GO" id="GO:0005524">
    <property type="term" value="F:ATP binding"/>
    <property type="evidence" value="ECO:0007669"/>
    <property type="project" value="UniProtKB-UniRule"/>
</dbReference>
<dbReference type="GO" id="GO:0016887">
    <property type="term" value="F:ATP hydrolysis activity"/>
    <property type="evidence" value="ECO:0007669"/>
    <property type="project" value="InterPro"/>
</dbReference>
<dbReference type="GO" id="GO:0003688">
    <property type="term" value="F:DNA replication origin binding"/>
    <property type="evidence" value="ECO:0007669"/>
    <property type="project" value="UniProtKB-UniRule"/>
</dbReference>
<dbReference type="GO" id="GO:0008289">
    <property type="term" value="F:lipid binding"/>
    <property type="evidence" value="ECO:0007669"/>
    <property type="project" value="UniProtKB-KW"/>
</dbReference>
<dbReference type="GO" id="GO:0006270">
    <property type="term" value="P:DNA replication initiation"/>
    <property type="evidence" value="ECO:0007669"/>
    <property type="project" value="UniProtKB-UniRule"/>
</dbReference>
<dbReference type="GO" id="GO:0006275">
    <property type="term" value="P:regulation of DNA replication"/>
    <property type="evidence" value="ECO:0007669"/>
    <property type="project" value="UniProtKB-UniRule"/>
</dbReference>
<dbReference type="CDD" id="cd00009">
    <property type="entry name" value="AAA"/>
    <property type="match status" value="1"/>
</dbReference>
<dbReference type="CDD" id="cd06571">
    <property type="entry name" value="Bac_DnaA_C"/>
    <property type="match status" value="1"/>
</dbReference>
<dbReference type="Gene3D" id="1.10.1750.10">
    <property type="match status" value="1"/>
</dbReference>
<dbReference type="Gene3D" id="1.10.8.60">
    <property type="match status" value="1"/>
</dbReference>
<dbReference type="Gene3D" id="3.30.300.180">
    <property type="match status" value="1"/>
</dbReference>
<dbReference type="Gene3D" id="3.40.50.300">
    <property type="entry name" value="P-loop containing nucleotide triphosphate hydrolases"/>
    <property type="match status" value="1"/>
</dbReference>
<dbReference type="HAMAP" id="MF_00377">
    <property type="entry name" value="DnaA_bact"/>
    <property type="match status" value="1"/>
</dbReference>
<dbReference type="InterPro" id="IPR003593">
    <property type="entry name" value="AAA+_ATPase"/>
</dbReference>
<dbReference type="InterPro" id="IPR001957">
    <property type="entry name" value="Chromosome_initiator_DnaA"/>
</dbReference>
<dbReference type="InterPro" id="IPR020591">
    <property type="entry name" value="Chromosome_initiator_DnaA-like"/>
</dbReference>
<dbReference type="InterPro" id="IPR018312">
    <property type="entry name" value="Chromosome_initiator_DnaA_CS"/>
</dbReference>
<dbReference type="InterPro" id="IPR013159">
    <property type="entry name" value="DnaA_C"/>
</dbReference>
<dbReference type="InterPro" id="IPR013317">
    <property type="entry name" value="DnaA_dom"/>
</dbReference>
<dbReference type="InterPro" id="IPR024633">
    <property type="entry name" value="DnaA_N_dom"/>
</dbReference>
<dbReference type="InterPro" id="IPR038454">
    <property type="entry name" value="DnaA_N_sf"/>
</dbReference>
<dbReference type="InterPro" id="IPR027417">
    <property type="entry name" value="P-loop_NTPase"/>
</dbReference>
<dbReference type="InterPro" id="IPR010921">
    <property type="entry name" value="Trp_repressor/repl_initiator"/>
</dbReference>
<dbReference type="NCBIfam" id="TIGR00362">
    <property type="entry name" value="DnaA"/>
    <property type="match status" value="1"/>
</dbReference>
<dbReference type="PANTHER" id="PTHR30050">
    <property type="entry name" value="CHROMOSOMAL REPLICATION INITIATOR PROTEIN DNAA"/>
    <property type="match status" value="1"/>
</dbReference>
<dbReference type="PANTHER" id="PTHR30050:SF2">
    <property type="entry name" value="CHROMOSOMAL REPLICATION INITIATOR PROTEIN DNAA"/>
    <property type="match status" value="1"/>
</dbReference>
<dbReference type="Pfam" id="PF00308">
    <property type="entry name" value="Bac_DnaA"/>
    <property type="match status" value="1"/>
</dbReference>
<dbReference type="Pfam" id="PF08299">
    <property type="entry name" value="Bac_DnaA_C"/>
    <property type="match status" value="1"/>
</dbReference>
<dbReference type="Pfam" id="PF11638">
    <property type="entry name" value="DnaA_N"/>
    <property type="match status" value="1"/>
</dbReference>
<dbReference type="PRINTS" id="PR00051">
    <property type="entry name" value="DNAA"/>
</dbReference>
<dbReference type="SMART" id="SM00382">
    <property type="entry name" value="AAA"/>
    <property type="match status" value="1"/>
</dbReference>
<dbReference type="SMART" id="SM00760">
    <property type="entry name" value="Bac_DnaA_C"/>
    <property type="match status" value="1"/>
</dbReference>
<dbReference type="SUPFAM" id="SSF52540">
    <property type="entry name" value="P-loop containing nucleoside triphosphate hydrolases"/>
    <property type="match status" value="1"/>
</dbReference>
<dbReference type="SUPFAM" id="SSF48295">
    <property type="entry name" value="TrpR-like"/>
    <property type="match status" value="1"/>
</dbReference>
<dbReference type="PROSITE" id="PS01008">
    <property type="entry name" value="DNAA"/>
    <property type="match status" value="1"/>
</dbReference>
<reference key="1">
    <citation type="journal article" date="2011" name="J. Bacteriol.">
        <title>Complete genome and proteome of Acholeplasma laidlawii.</title>
        <authorList>
            <person name="Lazarev V.N."/>
            <person name="Levitskii S.A."/>
            <person name="Basovskii Y.I."/>
            <person name="Chukin M.M."/>
            <person name="Akopian T.A."/>
            <person name="Vereshchagin V.V."/>
            <person name="Kostrjukova E.S."/>
            <person name="Kovaleva G.Y."/>
            <person name="Kazanov M.D."/>
            <person name="Malko D.B."/>
            <person name="Vitreschak A.G."/>
            <person name="Sernova N.V."/>
            <person name="Gelfand M.S."/>
            <person name="Demina I.A."/>
            <person name="Serebryakova M.V."/>
            <person name="Galyamina M.A."/>
            <person name="Vtyurin N.N."/>
            <person name="Rogov S.I."/>
            <person name="Alexeev D.G."/>
            <person name="Ladygina V.G."/>
            <person name="Govorun V.M."/>
        </authorList>
    </citation>
    <scope>NUCLEOTIDE SEQUENCE [LARGE SCALE GENOMIC DNA]</scope>
    <source>
        <strain>PG-8A</strain>
    </source>
</reference>
<evidence type="ECO:0000255" key="1">
    <source>
        <dbReference type="HAMAP-Rule" id="MF_00377"/>
    </source>
</evidence>
<proteinExistence type="inferred from homology"/>
<accession>A9NE65</accession>
<protein>
    <recommendedName>
        <fullName evidence="1">Chromosomal replication initiator protein DnaA</fullName>
    </recommendedName>
</protein>
<name>DNAA_ACHLI</name>
<sequence>MSPNSTLWQTILQDLEKLYNEETYNELFLPVTSTFKDQNGLLTMVVANEFLKNRINKLYIAKINELATKYSSTPVRLKFVSQEEVIEEPVADRKLTIDYRQGNLNSTYTFDSFVVGKSNMFAFRMAMKVADQPGAVANPFYIFGDVGLGKTHLMQAIGNYILDNDVEKRILYVKADNFIEDFVSLLSRNKNKTEEFNAKYKDIDVILVDDIQIMANASKTQMEFFKLFDYLYLNNKQIVITSDKPASQLTNIMPRLTTRFEAGLSVDIQIPELEHRISILKRKTATLDANLEVSEDILTFIASQFAANIREMEGALIRLISYAQTFNLEITMNVVEEALGAVLKTKKKTNDLNENNYDKIQSIVADYFQVSLPDLIGKKRHAKFTLPRHIAMYLIKLKYNIPYKTIGSLFNDRDHSTVLSACEKVERDMRMDSNLKFAVDSIVKKIDSPLLK</sequence>
<feature type="chain" id="PRO_1000079939" description="Chromosomal replication initiator protein DnaA">
    <location>
        <begin position="1"/>
        <end position="452"/>
    </location>
</feature>
<feature type="region of interest" description="Domain I, interacts with DnaA modulators" evidence="1">
    <location>
        <begin position="1"/>
        <end position="73"/>
    </location>
</feature>
<feature type="region of interest" description="Domain II" evidence="1">
    <location>
        <begin position="73"/>
        <end position="102"/>
    </location>
</feature>
<feature type="region of interest" description="Domain III, AAA+ region" evidence="1">
    <location>
        <begin position="103"/>
        <end position="323"/>
    </location>
</feature>
<feature type="region of interest" description="Domain IV, binds dsDNA" evidence="1">
    <location>
        <begin position="324"/>
        <end position="452"/>
    </location>
</feature>
<feature type="binding site" evidence="1">
    <location>
        <position position="147"/>
    </location>
    <ligand>
        <name>ATP</name>
        <dbReference type="ChEBI" id="CHEBI:30616"/>
    </ligand>
</feature>
<feature type="binding site" evidence="1">
    <location>
        <position position="149"/>
    </location>
    <ligand>
        <name>ATP</name>
        <dbReference type="ChEBI" id="CHEBI:30616"/>
    </ligand>
</feature>
<feature type="binding site" evidence="1">
    <location>
        <position position="150"/>
    </location>
    <ligand>
        <name>ATP</name>
        <dbReference type="ChEBI" id="CHEBI:30616"/>
    </ligand>
</feature>
<feature type="binding site" evidence="1">
    <location>
        <position position="151"/>
    </location>
    <ligand>
        <name>ATP</name>
        <dbReference type="ChEBI" id="CHEBI:30616"/>
    </ligand>
</feature>